<keyword id="KW-0067">ATP-binding</keyword>
<keyword id="KW-1015">Disulfide bond</keyword>
<keyword id="KW-0325">Glycoprotein</keyword>
<keyword id="KW-0418">Kinase</keyword>
<keyword id="KW-0472">Membrane</keyword>
<keyword id="KW-0547">Nucleotide-binding</keyword>
<keyword id="KW-0675">Receptor</keyword>
<keyword id="KW-1185">Reference proteome</keyword>
<keyword id="KW-0723">Serine/threonine-protein kinase</keyword>
<keyword id="KW-0732">Signal</keyword>
<keyword id="KW-0808">Transferase</keyword>
<keyword id="KW-0812">Transmembrane</keyword>
<keyword id="KW-1133">Transmembrane helix</keyword>
<protein>
    <recommendedName>
        <fullName>Serine/threonine-protein kinase-like protein CCR1</fullName>
        <ecNumber>2.7.11.1</ecNumber>
    </recommendedName>
    <alternativeName>
        <fullName>Protein CRINKLY 4 RELATED 1</fullName>
        <shortName>AtCRR1</shortName>
    </alternativeName>
</protein>
<comment type="function">
    <text>Serine/threonine-protein kinase with low activity.</text>
</comment>
<comment type="catalytic activity">
    <reaction evidence="5">
        <text>L-seryl-[protein] + ATP = O-phospho-L-seryl-[protein] + ADP + H(+)</text>
        <dbReference type="Rhea" id="RHEA:17989"/>
        <dbReference type="Rhea" id="RHEA-COMP:9863"/>
        <dbReference type="Rhea" id="RHEA-COMP:11604"/>
        <dbReference type="ChEBI" id="CHEBI:15378"/>
        <dbReference type="ChEBI" id="CHEBI:29999"/>
        <dbReference type="ChEBI" id="CHEBI:30616"/>
        <dbReference type="ChEBI" id="CHEBI:83421"/>
        <dbReference type="ChEBI" id="CHEBI:456216"/>
        <dbReference type="EC" id="2.7.11.1"/>
    </reaction>
</comment>
<comment type="catalytic activity">
    <reaction evidence="5">
        <text>L-threonyl-[protein] + ATP = O-phospho-L-threonyl-[protein] + ADP + H(+)</text>
        <dbReference type="Rhea" id="RHEA:46608"/>
        <dbReference type="Rhea" id="RHEA-COMP:11060"/>
        <dbReference type="Rhea" id="RHEA-COMP:11605"/>
        <dbReference type="ChEBI" id="CHEBI:15378"/>
        <dbReference type="ChEBI" id="CHEBI:30013"/>
        <dbReference type="ChEBI" id="CHEBI:30616"/>
        <dbReference type="ChEBI" id="CHEBI:61977"/>
        <dbReference type="ChEBI" id="CHEBI:456216"/>
        <dbReference type="EC" id="2.7.11.1"/>
    </reaction>
</comment>
<comment type="subunit">
    <text>Homodimer.</text>
</comment>
<comment type="subcellular location">
    <subcellularLocation>
        <location evidence="6">Membrane</location>
        <topology evidence="6">Single-pass type I membrane protein</topology>
    </subcellularLocation>
</comment>
<comment type="tissue specificity">
    <text evidence="5">Expressed in roots, leaves, shoot apical meristems (SAM), and floral buds.</text>
</comment>
<comment type="similarity">
    <text evidence="2">Belongs to the protein kinase superfamily. Ser/Thr protein kinase family.</text>
</comment>
<comment type="sequence caution" evidence="6">
    <conflict type="miscellaneous discrepancy">
        <sequence resource="EMBL" id="BX824605"/>
    </conflict>
    <text>Sequencing errors.</text>
</comment>
<reference key="1">
    <citation type="journal article" date="2000" name="Nature">
        <title>Sequence and analysis of chromosome 3 of the plant Arabidopsis thaliana.</title>
        <authorList>
            <person name="Salanoubat M."/>
            <person name="Lemcke K."/>
            <person name="Rieger M."/>
            <person name="Ansorge W."/>
            <person name="Unseld M."/>
            <person name="Fartmann B."/>
            <person name="Valle G."/>
            <person name="Bloecker H."/>
            <person name="Perez-Alonso M."/>
            <person name="Obermaier B."/>
            <person name="Delseny M."/>
            <person name="Boutry M."/>
            <person name="Grivell L.A."/>
            <person name="Mache R."/>
            <person name="Puigdomenech P."/>
            <person name="De Simone V."/>
            <person name="Choisne N."/>
            <person name="Artiguenave F."/>
            <person name="Robert C."/>
            <person name="Brottier P."/>
            <person name="Wincker P."/>
            <person name="Cattolico L."/>
            <person name="Weissenbach J."/>
            <person name="Saurin W."/>
            <person name="Quetier F."/>
            <person name="Schaefer M."/>
            <person name="Mueller-Auer S."/>
            <person name="Gabel C."/>
            <person name="Fuchs M."/>
            <person name="Benes V."/>
            <person name="Wurmbach E."/>
            <person name="Drzonek H."/>
            <person name="Erfle H."/>
            <person name="Jordan N."/>
            <person name="Bangert S."/>
            <person name="Wiedelmann R."/>
            <person name="Kranz H."/>
            <person name="Voss H."/>
            <person name="Holland R."/>
            <person name="Brandt P."/>
            <person name="Nyakatura G."/>
            <person name="Vezzi A."/>
            <person name="D'Angelo M."/>
            <person name="Pallavicini A."/>
            <person name="Toppo S."/>
            <person name="Simionati B."/>
            <person name="Conrad A."/>
            <person name="Hornischer K."/>
            <person name="Kauer G."/>
            <person name="Loehnert T.-H."/>
            <person name="Nordsiek G."/>
            <person name="Reichelt J."/>
            <person name="Scharfe M."/>
            <person name="Schoen O."/>
            <person name="Bargues M."/>
            <person name="Terol J."/>
            <person name="Climent J."/>
            <person name="Navarro P."/>
            <person name="Collado C."/>
            <person name="Perez-Perez A."/>
            <person name="Ottenwaelder B."/>
            <person name="Duchemin D."/>
            <person name="Cooke R."/>
            <person name="Laudie M."/>
            <person name="Berger-Llauro C."/>
            <person name="Purnelle B."/>
            <person name="Masuy D."/>
            <person name="de Haan M."/>
            <person name="Maarse A.C."/>
            <person name="Alcaraz J.-P."/>
            <person name="Cottet A."/>
            <person name="Casacuberta E."/>
            <person name="Monfort A."/>
            <person name="Argiriou A."/>
            <person name="Flores M."/>
            <person name="Liguori R."/>
            <person name="Vitale D."/>
            <person name="Mannhaupt G."/>
            <person name="Haase D."/>
            <person name="Schoof H."/>
            <person name="Rudd S."/>
            <person name="Zaccaria P."/>
            <person name="Mewes H.-W."/>
            <person name="Mayer K.F.X."/>
            <person name="Kaul S."/>
            <person name="Town C.D."/>
            <person name="Koo H.L."/>
            <person name="Tallon L.J."/>
            <person name="Jenkins J."/>
            <person name="Rooney T."/>
            <person name="Rizzo M."/>
            <person name="Walts A."/>
            <person name="Utterback T."/>
            <person name="Fujii C.Y."/>
            <person name="Shea T.P."/>
            <person name="Creasy T.H."/>
            <person name="Haas B."/>
            <person name="Maiti R."/>
            <person name="Wu D."/>
            <person name="Peterson J."/>
            <person name="Van Aken S."/>
            <person name="Pai G."/>
            <person name="Militscher J."/>
            <person name="Sellers P."/>
            <person name="Gill J.E."/>
            <person name="Feldblyum T.V."/>
            <person name="Preuss D."/>
            <person name="Lin X."/>
            <person name="Nierman W.C."/>
            <person name="Salzberg S.L."/>
            <person name="White O."/>
            <person name="Venter J.C."/>
            <person name="Fraser C.M."/>
            <person name="Kaneko T."/>
            <person name="Nakamura Y."/>
            <person name="Sato S."/>
            <person name="Kato T."/>
            <person name="Asamizu E."/>
            <person name="Sasamoto S."/>
            <person name="Kimura T."/>
            <person name="Idesawa K."/>
            <person name="Kawashima K."/>
            <person name="Kishida Y."/>
            <person name="Kiyokawa C."/>
            <person name="Kohara M."/>
            <person name="Matsumoto M."/>
            <person name="Matsuno A."/>
            <person name="Muraki A."/>
            <person name="Nakayama S."/>
            <person name="Nakazaki N."/>
            <person name="Shinpo S."/>
            <person name="Takeuchi C."/>
            <person name="Wada T."/>
            <person name="Watanabe A."/>
            <person name="Yamada M."/>
            <person name="Yasuda M."/>
            <person name="Tabata S."/>
        </authorList>
    </citation>
    <scope>NUCLEOTIDE SEQUENCE [LARGE SCALE GENOMIC DNA]</scope>
    <source>
        <strain>cv. Columbia</strain>
    </source>
</reference>
<reference key="2">
    <citation type="journal article" date="2017" name="Plant J.">
        <title>Araport11: a complete reannotation of the Arabidopsis thaliana reference genome.</title>
        <authorList>
            <person name="Cheng C.Y."/>
            <person name="Krishnakumar V."/>
            <person name="Chan A.P."/>
            <person name="Thibaud-Nissen F."/>
            <person name="Schobel S."/>
            <person name="Town C.D."/>
        </authorList>
    </citation>
    <scope>GENOME REANNOTATION</scope>
    <source>
        <strain>cv. Columbia</strain>
    </source>
</reference>
<reference key="3">
    <citation type="journal article" date="2004" name="Genome Res.">
        <title>Whole genome sequence comparisons and 'full-length' cDNA sequences: a combined approach to evaluate and improve Arabidopsis genome annotation.</title>
        <authorList>
            <person name="Castelli V."/>
            <person name="Aury J.-M."/>
            <person name="Jaillon O."/>
            <person name="Wincker P."/>
            <person name="Clepet C."/>
            <person name="Menard M."/>
            <person name="Cruaud C."/>
            <person name="Quetier F."/>
            <person name="Scarpelli C."/>
            <person name="Schaechter V."/>
            <person name="Temple G."/>
            <person name="Caboche M."/>
            <person name="Weissenbach J."/>
            <person name="Salanoubat M."/>
        </authorList>
    </citation>
    <scope>NUCLEOTIDE SEQUENCE [LARGE SCALE MRNA]</scope>
    <source>
        <strain>cv. Columbia</strain>
    </source>
</reference>
<reference key="4">
    <citation type="journal article" date="2005" name="Planta">
        <title>Molecular analysis of the CRINKLY4 gene family in Arabidopsis thaliana.</title>
        <authorList>
            <person name="Cao X."/>
            <person name="Li K."/>
            <person name="Suh S.-G."/>
            <person name="Guo T."/>
            <person name="Becraft P.W."/>
        </authorList>
    </citation>
    <scope>GENE FAMILY</scope>
    <scope>CATALYTIC ACTIVITY</scope>
    <scope>TISSUE SPECIFICITY</scope>
</reference>
<reference key="5">
    <citation type="journal article" date="2008" name="Arch. Biochem. Biophys.">
        <title>Dimerization properties of the transmembrane domains of Arabidopsis CRINKLY4 receptor-like kinase and homologs.</title>
        <authorList>
            <person name="Stokes K.D."/>
            <person name="Gururaj Rao A."/>
        </authorList>
    </citation>
    <scope>HOMODIMERIZATION</scope>
</reference>
<reference key="6">
    <citation type="journal article" date="2009" name="Mol. Plant">
        <title>Diverse transcriptional programs associated with environmental stress and hormones in the Arabidopsis receptor-like kinase gene family.</title>
        <authorList>
            <person name="Chae L."/>
            <person name="Sudat S."/>
            <person name="Dudoit S."/>
            <person name="Zhu T."/>
            <person name="Luan S."/>
        </authorList>
    </citation>
    <scope>GENE FAMILY</scope>
</reference>
<dbReference type="EC" id="2.7.11.1"/>
<dbReference type="EMBL" id="AC015985">
    <property type="protein sequence ID" value="AAF23257.1"/>
    <property type="molecule type" value="Genomic_DNA"/>
</dbReference>
<dbReference type="EMBL" id="AC016661">
    <property type="protein sequence ID" value="AAF23306.1"/>
    <property type="molecule type" value="Genomic_DNA"/>
</dbReference>
<dbReference type="EMBL" id="CP002686">
    <property type="protein sequence ID" value="AEE74812.1"/>
    <property type="molecule type" value="Genomic_DNA"/>
</dbReference>
<dbReference type="EMBL" id="BX824605">
    <property type="status" value="NOT_ANNOTATED_CDS"/>
    <property type="molecule type" value="mRNA"/>
</dbReference>
<dbReference type="RefSeq" id="NP_187589.1">
    <property type="nucleotide sequence ID" value="NM_111813.4"/>
</dbReference>
<dbReference type="SMR" id="Q9S7D9"/>
<dbReference type="FunCoup" id="Q9S7D9">
    <property type="interactions" value="362"/>
</dbReference>
<dbReference type="STRING" id="3702.Q9S7D9"/>
<dbReference type="GlyCosmos" id="Q9S7D9">
    <property type="glycosylation" value="11 sites, No reported glycans"/>
</dbReference>
<dbReference type="GlyGen" id="Q9S7D9">
    <property type="glycosylation" value="11 sites"/>
</dbReference>
<dbReference type="PaxDb" id="3702-AT3G09780.1"/>
<dbReference type="ProteomicsDB" id="244381"/>
<dbReference type="EnsemblPlants" id="AT3G09780.1">
    <property type="protein sequence ID" value="AT3G09780.1"/>
    <property type="gene ID" value="AT3G09780"/>
</dbReference>
<dbReference type="GeneID" id="820136"/>
<dbReference type="Gramene" id="AT3G09780.1">
    <property type="protein sequence ID" value="AT3G09780.1"/>
    <property type="gene ID" value="AT3G09780"/>
</dbReference>
<dbReference type="KEGG" id="ath:AT3G09780"/>
<dbReference type="Araport" id="AT3G09780"/>
<dbReference type="TAIR" id="AT3G09780">
    <property type="gene designation" value="CCR1"/>
</dbReference>
<dbReference type="eggNOG" id="ENOG502QUN0">
    <property type="taxonomic scope" value="Eukaryota"/>
</dbReference>
<dbReference type="HOGENOM" id="CLU_009948_0_0_1"/>
<dbReference type="InParanoid" id="Q9S7D9"/>
<dbReference type="OMA" id="VDCWDIV"/>
<dbReference type="OrthoDB" id="61110at2759"/>
<dbReference type="PhylomeDB" id="Q9S7D9"/>
<dbReference type="PRO" id="PR:Q9S7D9"/>
<dbReference type="Proteomes" id="UP000006548">
    <property type="component" value="Chromosome 3"/>
</dbReference>
<dbReference type="ExpressionAtlas" id="Q9S7D9">
    <property type="expression patterns" value="baseline and differential"/>
</dbReference>
<dbReference type="GO" id="GO:0016020">
    <property type="term" value="C:membrane"/>
    <property type="evidence" value="ECO:0007669"/>
    <property type="project" value="UniProtKB-SubCell"/>
</dbReference>
<dbReference type="GO" id="GO:0005524">
    <property type="term" value="F:ATP binding"/>
    <property type="evidence" value="ECO:0007669"/>
    <property type="project" value="UniProtKB-KW"/>
</dbReference>
<dbReference type="GO" id="GO:0042803">
    <property type="term" value="F:protein homodimerization activity"/>
    <property type="evidence" value="ECO:0000314"/>
    <property type="project" value="UniProtKB"/>
</dbReference>
<dbReference type="GO" id="GO:0004672">
    <property type="term" value="F:protein kinase activity"/>
    <property type="evidence" value="ECO:0000314"/>
    <property type="project" value="UniProtKB"/>
</dbReference>
<dbReference type="GO" id="GO:0106310">
    <property type="term" value="F:protein serine kinase activity"/>
    <property type="evidence" value="ECO:0007669"/>
    <property type="project" value="RHEA"/>
</dbReference>
<dbReference type="GO" id="GO:0004674">
    <property type="term" value="F:protein serine/threonine kinase activity"/>
    <property type="evidence" value="ECO:0007669"/>
    <property type="project" value="UniProtKB-KW"/>
</dbReference>
<dbReference type="FunFam" id="1.10.510.10:FF:000826">
    <property type="entry name" value="Serine/threonine-protein kinase-like protein CCR1"/>
    <property type="match status" value="1"/>
</dbReference>
<dbReference type="FunFam" id="1.10.510.10:FF:000940">
    <property type="entry name" value="Serine/threonine-protein kinase-like protein CCR1"/>
    <property type="match status" value="1"/>
</dbReference>
<dbReference type="FunFam" id="3.30.200.20:FF:000357">
    <property type="entry name" value="serine/threonine-protein kinase-like protein CCR1"/>
    <property type="match status" value="1"/>
</dbReference>
<dbReference type="Gene3D" id="3.30.200.20">
    <property type="entry name" value="Phosphorylase Kinase, domain 1"/>
    <property type="match status" value="1"/>
</dbReference>
<dbReference type="Gene3D" id="2.130.10.30">
    <property type="entry name" value="Regulator of chromosome condensation 1/beta-lactamase-inhibitor protein II"/>
    <property type="match status" value="2"/>
</dbReference>
<dbReference type="Gene3D" id="1.10.510.10">
    <property type="entry name" value="Transferase(Phosphotransferase) domain 1"/>
    <property type="match status" value="2"/>
</dbReference>
<dbReference type="InterPro" id="IPR011009">
    <property type="entry name" value="Kinase-like_dom_sf"/>
</dbReference>
<dbReference type="InterPro" id="IPR000719">
    <property type="entry name" value="Prot_kinase_dom"/>
</dbReference>
<dbReference type="InterPro" id="IPR017441">
    <property type="entry name" value="Protein_kinase_ATP_BS"/>
</dbReference>
<dbReference type="InterPro" id="IPR009091">
    <property type="entry name" value="RCC1/BLIP-II"/>
</dbReference>
<dbReference type="InterPro" id="IPR008271">
    <property type="entry name" value="Ser/Thr_kinase_AS"/>
</dbReference>
<dbReference type="InterPro" id="IPR001368">
    <property type="entry name" value="TNFR/NGFR_Cys_rich_reg"/>
</dbReference>
<dbReference type="PANTHER" id="PTHR47460">
    <property type="entry name" value="SERINE/THREONINE-PROTEIN KINASE-LIKE PROTEIN ACR4"/>
    <property type="match status" value="1"/>
</dbReference>
<dbReference type="PANTHER" id="PTHR47460:SF1">
    <property type="entry name" value="SERINE_THREONINE-PROTEIN KINASE-LIKE PROTEIN ACR4"/>
    <property type="match status" value="1"/>
</dbReference>
<dbReference type="Pfam" id="PF00069">
    <property type="entry name" value="Pkinase"/>
    <property type="match status" value="1"/>
</dbReference>
<dbReference type="SMART" id="SM00220">
    <property type="entry name" value="S_TKc"/>
    <property type="match status" value="1"/>
</dbReference>
<dbReference type="SUPFAM" id="SSF56112">
    <property type="entry name" value="Protein kinase-like (PK-like)"/>
    <property type="match status" value="1"/>
</dbReference>
<dbReference type="SUPFAM" id="SSF50985">
    <property type="entry name" value="RCC1/BLIP-II"/>
    <property type="match status" value="1"/>
</dbReference>
<dbReference type="PROSITE" id="PS00107">
    <property type="entry name" value="PROTEIN_KINASE_ATP"/>
    <property type="match status" value="1"/>
</dbReference>
<dbReference type="PROSITE" id="PS50011">
    <property type="entry name" value="PROTEIN_KINASE_DOM"/>
    <property type="match status" value="1"/>
</dbReference>
<dbReference type="PROSITE" id="PS00108">
    <property type="entry name" value="PROTEIN_KINASE_ST"/>
    <property type="match status" value="1"/>
</dbReference>
<dbReference type="PROSITE" id="PS50050">
    <property type="entry name" value="TNFR_NGFR_2"/>
    <property type="match status" value="1"/>
</dbReference>
<gene>
    <name type="primary">CCR1</name>
    <name type="synonym">CRR1</name>
    <name type="ordered locus">At3g09780</name>
    <name type="ORF">F11F8.37</name>
    <name type="ORF">F8A24.17</name>
</gene>
<proteinExistence type="evidence at protein level"/>
<name>ACCR1_ARATH</name>
<feature type="signal peptide" evidence="1">
    <location>
        <begin position="1"/>
        <end position="23"/>
    </location>
</feature>
<feature type="chain" id="PRO_0000382746" description="Serine/threonine-protein kinase-like protein CCR1">
    <location>
        <begin position="24"/>
        <end position="775"/>
    </location>
</feature>
<feature type="topological domain" description="Extracellular" evidence="1">
    <location>
        <begin position="24"/>
        <end position="439"/>
    </location>
</feature>
<feature type="transmembrane region" description="Helical" evidence="1">
    <location>
        <begin position="440"/>
        <end position="460"/>
    </location>
</feature>
<feature type="topological domain" description="Cytoplasmic" evidence="1">
    <location>
        <begin position="461"/>
        <end position="775"/>
    </location>
</feature>
<feature type="repeat" description="TNFR-Cys">
    <location>
        <begin position="351"/>
        <end position="406"/>
    </location>
</feature>
<feature type="domain" description="Protein kinase" evidence="2">
    <location>
        <begin position="520"/>
        <end position="770"/>
    </location>
</feature>
<feature type="active site" description="Proton acceptor" evidence="2 4">
    <location>
        <position position="645"/>
    </location>
</feature>
<feature type="binding site" evidence="2">
    <location>
        <begin position="526"/>
        <end position="534"/>
    </location>
    <ligand>
        <name>ATP</name>
        <dbReference type="ChEBI" id="CHEBI:30616"/>
    </ligand>
</feature>
<feature type="binding site" evidence="2">
    <location>
        <position position="548"/>
    </location>
    <ligand>
        <name>ATP</name>
        <dbReference type="ChEBI" id="CHEBI:30616"/>
    </ligand>
</feature>
<feature type="glycosylation site" description="N-linked (GlcNAc...) asparagine" evidence="1">
    <location>
        <position position="57"/>
    </location>
</feature>
<feature type="glycosylation site" description="N-linked (GlcNAc...) asparagine" evidence="1">
    <location>
        <position position="102"/>
    </location>
</feature>
<feature type="glycosylation site" description="N-linked (GlcNAc...) asparagine" evidence="1">
    <location>
        <position position="167"/>
    </location>
</feature>
<feature type="glycosylation site" description="N-linked (GlcNAc...) asparagine" evidence="1">
    <location>
        <position position="213"/>
    </location>
</feature>
<feature type="glycosylation site" description="N-linked (GlcNAc...) asparagine" evidence="1">
    <location>
        <position position="220"/>
    </location>
</feature>
<feature type="glycosylation site" description="N-linked (GlcNAc...) asparagine" evidence="1">
    <location>
        <position position="241"/>
    </location>
</feature>
<feature type="glycosylation site" description="N-linked (GlcNAc...) asparagine" evidence="1">
    <location>
        <position position="261"/>
    </location>
</feature>
<feature type="glycosylation site" description="N-linked (GlcNAc...) asparagine" evidence="1">
    <location>
        <position position="292"/>
    </location>
</feature>
<feature type="glycosylation site" description="N-linked (GlcNAc...) asparagine" evidence="1">
    <location>
        <position position="328"/>
    </location>
</feature>
<feature type="glycosylation site" description="N-linked (GlcNAc...) asparagine" evidence="1">
    <location>
        <position position="360"/>
    </location>
</feature>
<feature type="glycosylation site" description="N-linked (GlcNAc...) asparagine" evidence="1">
    <location>
        <position position="414"/>
    </location>
</feature>
<feature type="disulfide bond" evidence="3">
    <location>
        <begin position="352"/>
        <end position="381"/>
    </location>
</feature>
<feature type="disulfide bond" evidence="3">
    <location>
        <begin position="384"/>
        <end position="398"/>
    </location>
</feature>
<feature type="disulfide bond" evidence="3">
    <location>
        <begin position="388"/>
        <end position="406"/>
    </location>
</feature>
<evidence type="ECO:0000255" key="1"/>
<evidence type="ECO:0000255" key="2">
    <source>
        <dbReference type="PROSITE-ProRule" id="PRU00159"/>
    </source>
</evidence>
<evidence type="ECO:0000255" key="3">
    <source>
        <dbReference type="PROSITE-ProRule" id="PRU00206"/>
    </source>
</evidence>
<evidence type="ECO:0000255" key="4">
    <source>
        <dbReference type="PROSITE-ProRule" id="PRU10027"/>
    </source>
</evidence>
<evidence type="ECO:0000269" key="5">
    <source>
    </source>
</evidence>
<evidence type="ECO:0000305" key="6"/>
<organism>
    <name type="scientific">Arabidopsis thaliana</name>
    <name type="common">Mouse-ear cress</name>
    <dbReference type="NCBI Taxonomy" id="3702"/>
    <lineage>
        <taxon>Eukaryota</taxon>
        <taxon>Viridiplantae</taxon>
        <taxon>Streptophyta</taxon>
        <taxon>Embryophyta</taxon>
        <taxon>Tracheophyta</taxon>
        <taxon>Spermatophyta</taxon>
        <taxon>Magnoliopsida</taxon>
        <taxon>eudicotyledons</taxon>
        <taxon>Gunneridae</taxon>
        <taxon>Pentapetalae</taxon>
        <taxon>rosids</taxon>
        <taxon>malvids</taxon>
        <taxon>Brassicales</taxon>
        <taxon>Brassicaceae</taxon>
        <taxon>Camelineae</taxon>
        <taxon>Arabidopsis</taxon>
    </lineage>
</organism>
<sequence>METRCSLLFLSLILLYLPKPGSGFGSSGPIAASFGGSAFFCAIDASGRQDVICWGKNYSSPSSPSSSSSSSSIASSTSASYNIPSMAVLSGGDGFLCGILSNTSQAFCFSSLGSSSGMDLVPLAYRTTAYSQIAAGNSHVCAVRGAYYSDHDSGTIDCWEITRATNNNSLIAKENPNFYDQIVSNLVFNNIVSGDGFSCGGIRDGGMLCFGPNSSNLGFNTTSDNFQVLAAGKNSVCAILNLSREVKCWGEDESFVNSPMNDSRFVSLTAGPRHFCGIREDNHEVECWGNSNFSLIPKGSGFKAIASSDFIVCGIREEDLVLDCWMVNGSSTLAYDPPLELCSPGMCRAGPCNEKEFAFNASILNEPDLTSLCVRKELMVCSPCGSDCSHGFFLSSSCTANSDRICTPCSLCQNSSCSDICKLHNSNFPDKHWHQLQRLVLIIGSCASALLIIIIGCCVVPRIVTSPNKEDGAANQFKSCIGKPDLDTDQPLENVSPAPSVTPFAQVFRLSELKDATNGFKEFNELGRGSYGFVYKAVLADGRQVAVKRANAATIIHTNTREFETELEILCNIRHCNIVNLLGYSTEMGERLLVYEYMPHGTLHDHLHSGFSPLSWSLRIKIAMQTAKGLEYLHNEAEPRIIHGDVKSSNVLLDSEWVARVADFGLVTSSNEKNLDIKRDVYDFGVVLLEILTGRKRYDRDCDPPEIVEWTVPVIREGKAAAIVDTYIALPRNVEPLLKLADVAELCVREDPNQQPTMSELANWLEHVARDALIF</sequence>
<accession>Q9S7D9</accession>